<accession>A6VGE3</accession>
<protein>
    <recommendedName>
        <fullName evidence="1">Cobalt-precorrin-5B C(1)-methyltransferase</fullName>
        <ecNumber evidence="1">2.1.1.195</ecNumber>
    </recommendedName>
    <alternativeName>
        <fullName evidence="1">Cobalt-precorrin-6A synthase</fullName>
    </alternativeName>
</protein>
<evidence type="ECO:0000255" key="1">
    <source>
        <dbReference type="HAMAP-Rule" id="MF_00787"/>
    </source>
</evidence>
<feature type="chain" id="PRO_1000046865" description="Cobalt-precorrin-5B C(1)-methyltransferase">
    <location>
        <begin position="1"/>
        <end position="366"/>
    </location>
</feature>
<reference key="1">
    <citation type="submission" date="2007-06" db="EMBL/GenBank/DDBJ databases">
        <title>Complete sequence of Methanococcus maripaludis C7.</title>
        <authorList>
            <consortium name="US DOE Joint Genome Institute"/>
            <person name="Copeland A."/>
            <person name="Lucas S."/>
            <person name="Lapidus A."/>
            <person name="Barry K."/>
            <person name="Glavina del Rio T."/>
            <person name="Dalin E."/>
            <person name="Tice H."/>
            <person name="Pitluck S."/>
            <person name="Clum A."/>
            <person name="Schmutz J."/>
            <person name="Larimer F."/>
            <person name="Land M."/>
            <person name="Hauser L."/>
            <person name="Kyrpides N."/>
            <person name="Anderson I."/>
            <person name="Sieprawska-Lupa M."/>
            <person name="Whitman W.B."/>
            <person name="Richardson P."/>
        </authorList>
    </citation>
    <scope>NUCLEOTIDE SEQUENCE [LARGE SCALE GENOMIC DNA]</scope>
    <source>
        <strain>C7 / ATCC BAA-1331</strain>
    </source>
</reference>
<sequence>MGKIDFRLEKTFGYTTGACAAAGAYSALYFLKNNERLNFVEIVNLKEDSLIIPIKNIEKQGDTAISTVEKFSGEDIDITNGMDIEIEVTLNLDNNSSESSNVDIIGGIGVGIITKSGLQVTLGKPAINPKPREMIETNLKSLLTDNECVTVKISVPNGDEIAKKTLNPKLGIIGGISILGTTGIVRPMSNDAYKESLAPQIDVALANNFENLIFVPGNIGTKHAKILLHAEEDQIIEVSNFWDYMLNKAKEKGVKDITVFGHAGKIVKLAGGIFDTHSKVADARNEILCAYTSLVTQDVEILQKILQSNTTEDIVEILTEKGILKEVFDNVSKRVVERLSSRWDGINFSCIIINMKGNMLGKYDQG</sequence>
<dbReference type="EC" id="2.1.1.195" evidence="1"/>
<dbReference type="EMBL" id="CP000745">
    <property type="protein sequence ID" value="ABR65519.1"/>
    <property type="molecule type" value="Genomic_DNA"/>
</dbReference>
<dbReference type="SMR" id="A6VGE3"/>
<dbReference type="STRING" id="426368.MmarC7_0450"/>
<dbReference type="KEGG" id="mmz:MmarC7_0450"/>
<dbReference type="eggNOG" id="arCOG04383">
    <property type="taxonomic scope" value="Archaea"/>
</dbReference>
<dbReference type="HOGENOM" id="CLU_041273_1_0_2"/>
<dbReference type="OrthoDB" id="10423at2157"/>
<dbReference type="UniPathway" id="UPA00148">
    <property type="reaction ID" value="UER00227"/>
</dbReference>
<dbReference type="GO" id="GO:0043780">
    <property type="term" value="F:cobalt-precorrin-5B C1-methyltransferase activity"/>
    <property type="evidence" value="ECO:0007669"/>
    <property type="project" value="RHEA"/>
</dbReference>
<dbReference type="GO" id="GO:0019251">
    <property type="term" value="P:anaerobic cobalamin biosynthetic process"/>
    <property type="evidence" value="ECO:0007669"/>
    <property type="project" value="UniProtKB-UniRule"/>
</dbReference>
<dbReference type="GO" id="GO:0032259">
    <property type="term" value="P:methylation"/>
    <property type="evidence" value="ECO:0007669"/>
    <property type="project" value="UniProtKB-KW"/>
</dbReference>
<dbReference type="Gene3D" id="3.30.2110.10">
    <property type="entry name" value="CbiD-like"/>
    <property type="match status" value="1"/>
</dbReference>
<dbReference type="HAMAP" id="MF_00787">
    <property type="entry name" value="CbiD"/>
    <property type="match status" value="1"/>
</dbReference>
<dbReference type="InterPro" id="IPR002748">
    <property type="entry name" value="CbiD"/>
</dbReference>
<dbReference type="InterPro" id="IPR036074">
    <property type="entry name" value="CbiD_sf"/>
</dbReference>
<dbReference type="NCBIfam" id="TIGR00312">
    <property type="entry name" value="cbiD"/>
    <property type="match status" value="1"/>
</dbReference>
<dbReference type="PANTHER" id="PTHR35863">
    <property type="entry name" value="COBALT-PRECORRIN-5B C(1)-METHYLTRANSFERASE"/>
    <property type="match status" value="1"/>
</dbReference>
<dbReference type="PANTHER" id="PTHR35863:SF1">
    <property type="entry name" value="COBALT-PRECORRIN-5B C(1)-METHYLTRANSFERASE"/>
    <property type="match status" value="1"/>
</dbReference>
<dbReference type="Pfam" id="PF01888">
    <property type="entry name" value="CbiD"/>
    <property type="match status" value="1"/>
</dbReference>
<dbReference type="PIRSF" id="PIRSF026782">
    <property type="entry name" value="CbiD"/>
    <property type="match status" value="1"/>
</dbReference>
<dbReference type="SUPFAM" id="SSF111342">
    <property type="entry name" value="CbiD-like"/>
    <property type="match status" value="1"/>
</dbReference>
<keyword id="KW-0169">Cobalamin biosynthesis</keyword>
<keyword id="KW-0489">Methyltransferase</keyword>
<keyword id="KW-0949">S-adenosyl-L-methionine</keyword>
<keyword id="KW-0808">Transferase</keyword>
<proteinExistence type="inferred from homology"/>
<comment type="function">
    <text evidence="1">Catalyzes the methylation of C-1 in cobalt-precorrin-5B to form cobalt-precorrin-6A.</text>
</comment>
<comment type="catalytic activity">
    <reaction evidence="1">
        <text>Co-precorrin-5B + S-adenosyl-L-methionine = Co-precorrin-6A + S-adenosyl-L-homocysteine</text>
        <dbReference type="Rhea" id="RHEA:26285"/>
        <dbReference type="ChEBI" id="CHEBI:57856"/>
        <dbReference type="ChEBI" id="CHEBI:59789"/>
        <dbReference type="ChEBI" id="CHEBI:60063"/>
        <dbReference type="ChEBI" id="CHEBI:60064"/>
        <dbReference type="EC" id="2.1.1.195"/>
    </reaction>
</comment>
<comment type="pathway">
    <text evidence="1">Cofactor biosynthesis; adenosylcobalamin biosynthesis; cob(II)yrinate a,c-diamide from sirohydrochlorin (anaerobic route): step 6/10.</text>
</comment>
<comment type="similarity">
    <text evidence="1">Belongs to the CbiD family.</text>
</comment>
<gene>
    <name evidence="1" type="primary">cbiD</name>
    <name type="ordered locus">MmarC7_0450</name>
</gene>
<name>CBID_METM7</name>
<organism>
    <name type="scientific">Methanococcus maripaludis (strain C7 / ATCC BAA-1331)</name>
    <dbReference type="NCBI Taxonomy" id="426368"/>
    <lineage>
        <taxon>Archaea</taxon>
        <taxon>Methanobacteriati</taxon>
        <taxon>Methanobacteriota</taxon>
        <taxon>Methanomada group</taxon>
        <taxon>Methanococci</taxon>
        <taxon>Methanococcales</taxon>
        <taxon>Methanococcaceae</taxon>
        <taxon>Methanococcus</taxon>
    </lineage>
</organism>